<sequence>MSDKYYRSAYMNVDLNAVASNFKVFSTLHPNKTVMAVVKANAYGLGSVKVARHLMENGATFFAVATLDEAIELRMHGITAKILVLGVLPAKDIDKAIQHRVALTVPSKQWLKEAIKNISGEQEKKLWLHIKLDTGMGRLGIKDTNTYQEVIEIIQQYEQLVFEGVFTHFACADEPGDMTTEQYQRFKDMVNEAIKPEYIHCQNSAGSLLMDCQFCNAIRPGISLYGYYPSEYVQQKVKVHLKPSVQLIANVVQTKTLQAGESVSYGATYTATDPTTIALLPIGYADGYLRIMQGSFVNVNGHQCEVIGRVCMDQTIVKVPDQVKAGDSVILIDNHRESPQSVEVVAEKQHTINYEVLCNLSRRLPRIYHDGDQRFVTNELLK</sequence>
<comment type="function">
    <text evidence="1">Catalyzes the interconversion of L-alanine and D-alanine. May also act on other amino acids.</text>
</comment>
<comment type="catalytic activity">
    <reaction evidence="1">
        <text>L-alanine = D-alanine</text>
        <dbReference type="Rhea" id="RHEA:20249"/>
        <dbReference type="ChEBI" id="CHEBI:57416"/>
        <dbReference type="ChEBI" id="CHEBI:57972"/>
        <dbReference type="EC" id="5.1.1.1"/>
    </reaction>
</comment>
<comment type="cofactor">
    <cofactor evidence="1">
        <name>pyridoxal 5'-phosphate</name>
        <dbReference type="ChEBI" id="CHEBI:597326"/>
    </cofactor>
</comment>
<comment type="pathway">
    <text evidence="1">Amino-acid biosynthesis; D-alanine biosynthesis; D-alanine from L-alanine: step 1/1.</text>
</comment>
<comment type="similarity">
    <text evidence="1">Belongs to the alanine racemase family.</text>
</comment>
<proteinExistence type="evidence at protein level"/>
<name>ALR1_STAAN</name>
<accession>P63480</accession>
<accession>Q99SI5</accession>
<evidence type="ECO:0000255" key="1">
    <source>
        <dbReference type="HAMAP-Rule" id="MF_01201"/>
    </source>
</evidence>
<reference key="1">
    <citation type="journal article" date="2001" name="Lancet">
        <title>Whole genome sequencing of meticillin-resistant Staphylococcus aureus.</title>
        <authorList>
            <person name="Kuroda M."/>
            <person name="Ohta T."/>
            <person name="Uchiyama I."/>
            <person name="Baba T."/>
            <person name="Yuzawa H."/>
            <person name="Kobayashi I."/>
            <person name="Cui L."/>
            <person name="Oguchi A."/>
            <person name="Aoki K."/>
            <person name="Nagai Y."/>
            <person name="Lian J.-Q."/>
            <person name="Ito T."/>
            <person name="Kanamori M."/>
            <person name="Matsumaru H."/>
            <person name="Maruyama A."/>
            <person name="Murakami H."/>
            <person name="Hosoyama A."/>
            <person name="Mizutani-Ui Y."/>
            <person name="Takahashi N.K."/>
            <person name="Sawano T."/>
            <person name="Inoue R."/>
            <person name="Kaito C."/>
            <person name="Sekimizu K."/>
            <person name="Hirakawa H."/>
            <person name="Kuhara S."/>
            <person name="Goto S."/>
            <person name="Yabuzaki J."/>
            <person name="Kanehisa M."/>
            <person name="Yamashita A."/>
            <person name="Oshima K."/>
            <person name="Furuya K."/>
            <person name="Yoshino C."/>
            <person name="Shiba T."/>
            <person name="Hattori M."/>
            <person name="Ogasawara N."/>
            <person name="Hayashi H."/>
            <person name="Hiramatsu K."/>
        </authorList>
    </citation>
    <scope>NUCLEOTIDE SEQUENCE [LARGE SCALE GENOMIC DNA]</scope>
    <source>
        <strain>N315</strain>
    </source>
</reference>
<reference key="2">
    <citation type="submission" date="2007-10" db="UniProtKB">
        <title>Shotgun proteomic analysis of total and membrane protein extracts of S. aureus strain N315.</title>
        <authorList>
            <person name="Vaezzadeh A.R."/>
            <person name="Deshusses J."/>
            <person name="Lescuyer P."/>
            <person name="Hochstrasser D.F."/>
        </authorList>
    </citation>
    <scope>IDENTIFICATION BY MASS SPECTROMETRY [LARGE SCALE ANALYSIS]</scope>
    <source>
        <strain>N315</strain>
    </source>
</reference>
<gene>
    <name type="primary">alr1</name>
    <name type="synonym">alr</name>
    <name type="ordered locus">SA1874</name>
</gene>
<organism>
    <name type="scientific">Staphylococcus aureus (strain N315)</name>
    <dbReference type="NCBI Taxonomy" id="158879"/>
    <lineage>
        <taxon>Bacteria</taxon>
        <taxon>Bacillati</taxon>
        <taxon>Bacillota</taxon>
        <taxon>Bacilli</taxon>
        <taxon>Bacillales</taxon>
        <taxon>Staphylococcaceae</taxon>
        <taxon>Staphylococcus</taxon>
    </lineage>
</organism>
<feature type="chain" id="PRO_0000114569" description="Alanine racemase 1">
    <location>
        <begin position="1"/>
        <end position="382"/>
    </location>
</feature>
<feature type="active site" description="Proton acceptor; specific for D-alanine" evidence="1">
    <location>
        <position position="39"/>
    </location>
</feature>
<feature type="active site" description="Proton acceptor; specific for L-alanine" evidence="1">
    <location>
        <position position="265"/>
    </location>
</feature>
<feature type="binding site" evidence="1">
    <location>
        <position position="138"/>
    </location>
    <ligand>
        <name>substrate</name>
    </ligand>
</feature>
<feature type="binding site" evidence="1">
    <location>
        <position position="312"/>
    </location>
    <ligand>
        <name>substrate</name>
    </ligand>
</feature>
<feature type="modified residue" description="N6-(pyridoxal phosphate)lysine" evidence="1">
    <location>
        <position position="39"/>
    </location>
</feature>
<protein>
    <recommendedName>
        <fullName evidence="1">Alanine racemase 1</fullName>
        <ecNumber evidence="1">5.1.1.1</ecNumber>
    </recommendedName>
</protein>
<keyword id="KW-0413">Isomerase</keyword>
<keyword id="KW-0663">Pyridoxal phosphate</keyword>
<dbReference type="EC" id="5.1.1.1" evidence="1"/>
<dbReference type="EMBL" id="BA000018">
    <property type="protein sequence ID" value="BAB43157.1"/>
    <property type="molecule type" value="Genomic_DNA"/>
</dbReference>
<dbReference type="PIR" id="D89999">
    <property type="entry name" value="D89999"/>
</dbReference>
<dbReference type="RefSeq" id="WP_001281154.1">
    <property type="nucleotide sequence ID" value="NC_002745.2"/>
</dbReference>
<dbReference type="SMR" id="P63480"/>
<dbReference type="EnsemblBacteria" id="BAB43157">
    <property type="protein sequence ID" value="BAB43157"/>
    <property type="gene ID" value="BAB43157"/>
</dbReference>
<dbReference type="KEGG" id="sau:SA1874"/>
<dbReference type="HOGENOM" id="CLU_028393_2_1_9"/>
<dbReference type="UniPathway" id="UPA00042">
    <property type="reaction ID" value="UER00497"/>
</dbReference>
<dbReference type="GO" id="GO:0005829">
    <property type="term" value="C:cytosol"/>
    <property type="evidence" value="ECO:0007669"/>
    <property type="project" value="TreeGrafter"/>
</dbReference>
<dbReference type="GO" id="GO:0008784">
    <property type="term" value="F:alanine racemase activity"/>
    <property type="evidence" value="ECO:0007669"/>
    <property type="project" value="UniProtKB-UniRule"/>
</dbReference>
<dbReference type="GO" id="GO:0030170">
    <property type="term" value="F:pyridoxal phosphate binding"/>
    <property type="evidence" value="ECO:0007669"/>
    <property type="project" value="UniProtKB-UniRule"/>
</dbReference>
<dbReference type="GO" id="GO:0030632">
    <property type="term" value="P:D-alanine biosynthetic process"/>
    <property type="evidence" value="ECO:0007669"/>
    <property type="project" value="UniProtKB-UniRule"/>
</dbReference>
<dbReference type="GO" id="GO:0009252">
    <property type="term" value="P:peptidoglycan biosynthetic process"/>
    <property type="evidence" value="ECO:0007669"/>
    <property type="project" value="TreeGrafter"/>
</dbReference>
<dbReference type="CDD" id="cd00430">
    <property type="entry name" value="PLPDE_III_AR"/>
    <property type="match status" value="1"/>
</dbReference>
<dbReference type="FunFam" id="2.40.37.10:FF:000006">
    <property type="entry name" value="Alanine racemase"/>
    <property type="match status" value="1"/>
</dbReference>
<dbReference type="FunFam" id="3.20.20.10:FF:000002">
    <property type="entry name" value="Alanine racemase"/>
    <property type="match status" value="1"/>
</dbReference>
<dbReference type="Gene3D" id="3.20.20.10">
    <property type="entry name" value="Alanine racemase"/>
    <property type="match status" value="1"/>
</dbReference>
<dbReference type="Gene3D" id="2.40.37.10">
    <property type="entry name" value="Lyase, Ornithine Decarboxylase, Chain A, domain 1"/>
    <property type="match status" value="1"/>
</dbReference>
<dbReference type="HAMAP" id="MF_01201">
    <property type="entry name" value="Ala_racemase"/>
    <property type="match status" value="1"/>
</dbReference>
<dbReference type="InterPro" id="IPR000821">
    <property type="entry name" value="Ala_racemase"/>
</dbReference>
<dbReference type="InterPro" id="IPR009006">
    <property type="entry name" value="Ala_racemase/Decarboxylase_C"/>
</dbReference>
<dbReference type="InterPro" id="IPR011079">
    <property type="entry name" value="Ala_racemase_C"/>
</dbReference>
<dbReference type="InterPro" id="IPR001608">
    <property type="entry name" value="Ala_racemase_N"/>
</dbReference>
<dbReference type="InterPro" id="IPR020622">
    <property type="entry name" value="Ala_racemase_pyridoxalP-BS"/>
</dbReference>
<dbReference type="InterPro" id="IPR029066">
    <property type="entry name" value="PLP-binding_barrel"/>
</dbReference>
<dbReference type="NCBIfam" id="TIGR00492">
    <property type="entry name" value="alr"/>
    <property type="match status" value="1"/>
</dbReference>
<dbReference type="PANTHER" id="PTHR30511">
    <property type="entry name" value="ALANINE RACEMASE"/>
    <property type="match status" value="1"/>
</dbReference>
<dbReference type="PANTHER" id="PTHR30511:SF0">
    <property type="entry name" value="ALANINE RACEMASE, CATABOLIC-RELATED"/>
    <property type="match status" value="1"/>
</dbReference>
<dbReference type="Pfam" id="PF00842">
    <property type="entry name" value="Ala_racemase_C"/>
    <property type="match status" value="1"/>
</dbReference>
<dbReference type="Pfam" id="PF01168">
    <property type="entry name" value="Ala_racemase_N"/>
    <property type="match status" value="1"/>
</dbReference>
<dbReference type="PRINTS" id="PR00992">
    <property type="entry name" value="ALARACEMASE"/>
</dbReference>
<dbReference type="SMART" id="SM01005">
    <property type="entry name" value="Ala_racemase_C"/>
    <property type="match status" value="1"/>
</dbReference>
<dbReference type="SUPFAM" id="SSF50621">
    <property type="entry name" value="Alanine racemase C-terminal domain-like"/>
    <property type="match status" value="1"/>
</dbReference>
<dbReference type="SUPFAM" id="SSF51419">
    <property type="entry name" value="PLP-binding barrel"/>
    <property type="match status" value="1"/>
</dbReference>
<dbReference type="PROSITE" id="PS00395">
    <property type="entry name" value="ALANINE_RACEMASE"/>
    <property type="match status" value="1"/>
</dbReference>